<gene>
    <name evidence="1" type="primary">cbpA</name>
    <name type="ordered locus">Pput_4726</name>
</gene>
<protein>
    <recommendedName>
        <fullName evidence="1">Curved DNA-binding protein</fullName>
    </recommendedName>
</protein>
<feature type="chain" id="PRO_1000065528" description="Curved DNA-binding protein">
    <location>
        <begin position="1"/>
        <end position="319"/>
    </location>
</feature>
<feature type="domain" description="J" evidence="1">
    <location>
        <begin position="5"/>
        <end position="69"/>
    </location>
</feature>
<dbReference type="EMBL" id="CP000712">
    <property type="protein sequence ID" value="ABQ80846.1"/>
    <property type="molecule type" value="Genomic_DNA"/>
</dbReference>
<dbReference type="SMR" id="A5W9N6"/>
<dbReference type="KEGG" id="ppf:Pput_4726"/>
<dbReference type="eggNOG" id="COG0484">
    <property type="taxonomic scope" value="Bacteria"/>
</dbReference>
<dbReference type="HOGENOM" id="CLU_017633_0_0_6"/>
<dbReference type="GO" id="GO:0005737">
    <property type="term" value="C:cytoplasm"/>
    <property type="evidence" value="ECO:0007669"/>
    <property type="project" value="UniProtKB-UniRule"/>
</dbReference>
<dbReference type="GO" id="GO:0009295">
    <property type="term" value="C:nucleoid"/>
    <property type="evidence" value="ECO:0007669"/>
    <property type="project" value="UniProtKB-SubCell"/>
</dbReference>
<dbReference type="GO" id="GO:0003681">
    <property type="term" value="F:bent DNA binding"/>
    <property type="evidence" value="ECO:0007669"/>
    <property type="project" value="UniProtKB-UniRule"/>
</dbReference>
<dbReference type="GO" id="GO:0051082">
    <property type="term" value="F:unfolded protein binding"/>
    <property type="evidence" value="ECO:0007669"/>
    <property type="project" value="InterPro"/>
</dbReference>
<dbReference type="GO" id="GO:0051085">
    <property type="term" value="P:chaperone cofactor-dependent protein refolding"/>
    <property type="evidence" value="ECO:0007669"/>
    <property type="project" value="TreeGrafter"/>
</dbReference>
<dbReference type="GO" id="GO:0042026">
    <property type="term" value="P:protein refolding"/>
    <property type="evidence" value="ECO:0007669"/>
    <property type="project" value="TreeGrafter"/>
</dbReference>
<dbReference type="CDD" id="cd06257">
    <property type="entry name" value="DnaJ"/>
    <property type="match status" value="1"/>
</dbReference>
<dbReference type="CDD" id="cd10747">
    <property type="entry name" value="DnaJ_C"/>
    <property type="match status" value="1"/>
</dbReference>
<dbReference type="FunFam" id="2.60.260.20:FF:000008">
    <property type="entry name" value="Curved DNA-binding protein"/>
    <property type="match status" value="1"/>
</dbReference>
<dbReference type="FunFam" id="2.60.260.20:FF:000013">
    <property type="entry name" value="DnaJ subfamily B member 11"/>
    <property type="match status" value="1"/>
</dbReference>
<dbReference type="Gene3D" id="1.10.287.110">
    <property type="entry name" value="DnaJ domain"/>
    <property type="match status" value="1"/>
</dbReference>
<dbReference type="Gene3D" id="1.20.5.460">
    <property type="entry name" value="Single helix bin"/>
    <property type="match status" value="1"/>
</dbReference>
<dbReference type="Gene3D" id="2.60.260.20">
    <property type="entry name" value="Urease metallochaperone UreE, N-terminal domain"/>
    <property type="match status" value="2"/>
</dbReference>
<dbReference type="HAMAP" id="MF_01154">
    <property type="entry name" value="CbpA"/>
    <property type="match status" value="1"/>
</dbReference>
<dbReference type="InterPro" id="IPR023859">
    <property type="entry name" value="DNA-bd_curved-DNA"/>
</dbReference>
<dbReference type="InterPro" id="IPR002939">
    <property type="entry name" value="DnaJ_C"/>
</dbReference>
<dbReference type="InterPro" id="IPR001623">
    <property type="entry name" value="DnaJ_domain"/>
</dbReference>
<dbReference type="InterPro" id="IPR018253">
    <property type="entry name" value="DnaJ_domain_CS"/>
</dbReference>
<dbReference type="InterPro" id="IPR008971">
    <property type="entry name" value="HSP40/DnaJ_pept-bd"/>
</dbReference>
<dbReference type="InterPro" id="IPR036869">
    <property type="entry name" value="J_dom_sf"/>
</dbReference>
<dbReference type="NCBIfam" id="NF007618">
    <property type="entry name" value="PRK10266.1"/>
    <property type="match status" value="1"/>
</dbReference>
<dbReference type="PANTHER" id="PTHR43096">
    <property type="entry name" value="DNAJ HOMOLOG 1, MITOCHONDRIAL-RELATED"/>
    <property type="match status" value="1"/>
</dbReference>
<dbReference type="PANTHER" id="PTHR43096:SF52">
    <property type="entry name" value="DNAJ HOMOLOG 1, MITOCHONDRIAL-RELATED"/>
    <property type="match status" value="1"/>
</dbReference>
<dbReference type="Pfam" id="PF00226">
    <property type="entry name" value="DnaJ"/>
    <property type="match status" value="1"/>
</dbReference>
<dbReference type="Pfam" id="PF01556">
    <property type="entry name" value="DnaJ_C"/>
    <property type="match status" value="1"/>
</dbReference>
<dbReference type="PRINTS" id="PR00625">
    <property type="entry name" value="JDOMAIN"/>
</dbReference>
<dbReference type="SMART" id="SM00271">
    <property type="entry name" value="DnaJ"/>
    <property type="match status" value="1"/>
</dbReference>
<dbReference type="SUPFAM" id="SSF46565">
    <property type="entry name" value="Chaperone J-domain"/>
    <property type="match status" value="1"/>
</dbReference>
<dbReference type="SUPFAM" id="SSF49493">
    <property type="entry name" value="HSP40/DnaJ peptide-binding domain"/>
    <property type="match status" value="2"/>
</dbReference>
<dbReference type="PROSITE" id="PS00636">
    <property type="entry name" value="DNAJ_1"/>
    <property type="match status" value="1"/>
</dbReference>
<dbReference type="PROSITE" id="PS50076">
    <property type="entry name" value="DNAJ_2"/>
    <property type="match status" value="1"/>
</dbReference>
<evidence type="ECO:0000255" key="1">
    <source>
        <dbReference type="HAMAP-Rule" id="MF_01154"/>
    </source>
</evidence>
<proteinExistence type="inferred from homology"/>
<accession>A5W9N6</accession>
<sequence length="319" mass="34778">MDFKDYYKILGVEPTADEKAIKAAYRKLARKYHPDVSKERDAEEKFKEANEAYEVLGDAQKRAEFDEIRKYGGQHGRPFQAPPGWESRGGGGGFEGGDFSDFFSSIFGGRSAGGNPFGGARQQQRSAGRRGQDVELELAVFLEETLSKESKQISFQVPQTNAMGQRTGFTTKTLNVRIPAGVTDGERIRLKGQGAPGSGGGANGDLFLTIRMAPHPLFDVEGHDLIITVPLAPWEAALGAKVAVPTLDGKINLTIRPDSQSGQRLRVPGKGLVNKQGARGNLYAQLKVVMPPASDESARELWTKLSEKAAFNPRTQWSK</sequence>
<name>CBPA_PSEP1</name>
<organism>
    <name type="scientific">Pseudomonas putida (strain ATCC 700007 / DSM 6899 / JCM 31910 / BCRC 17059 / LMG 24140 / F1)</name>
    <dbReference type="NCBI Taxonomy" id="351746"/>
    <lineage>
        <taxon>Bacteria</taxon>
        <taxon>Pseudomonadati</taxon>
        <taxon>Pseudomonadota</taxon>
        <taxon>Gammaproteobacteria</taxon>
        <taxon>Pseudomonadales</taxon>
        <taxon>Pseudomonadaceae</taxon>
        <taxon>Pseudomonas</taxon>
    </lineage>
</organism>
<comment type="function">
    <text evidence="1">DNA-binding protein that preferentially recognizes a curved DNA sequence. It is probably a functional analog of DnaJ; displays overlapping activities with DnaJ, but functions under different conditions, probably acting as a molecular chaperone in an adaptive response to environmental stresses other than heat shock. Lacks autonomous chaperone activity; binds native substrates and targets them for recognition by DnaK. Its activity is inhibited by the binding of CbpM.</text>
</comment>
<comment type="subcellular location">
    <subcellularLocation>
        <location evidence="1">Cytoplasm</location>
        <location evidence="1">Nucleoid</location>
    </subcellularLocation>
</comment>
<keyword id="KW-0143">Chaperone</keyword>
<keyword id="KW-0963">Cytoplasm</keyword>
<keyword id="KW-0238">DNA-binding</keyword>
<reference key="1">
    <citation type="submission" date="2007-05" db="EMBL/GenBank/DDBJ databases">
        <title>Complete sequence of Pseudomonas putida F1.</title>
        <authorList>
            <consortium name="US DOE Joint Genome Institute"/>
            <person name="Copeland A."/>
            <person name="Lucas S."/>
            <person name="Lapidus A."/>
            <person name="Barry K."/>
            <person name="Detter J.C."/>
            <person name="Glavina del Rio T."/>
            <person name="Hammon N."/>
            <person name="Israni S."/>
            <person name="Dalin E."/>
            <person name="Tice H."/>
            <person name="Pitluck S."/>
            <person name="Chain P."/>
            <person name="Malfatti S."/>
            <person name="Shin M."/>
            <person name="Vergez L."/>
            <person name="Schmutz J."/>
            <person name="Larimer F."/>
            <person name="Land M."/>
            <person name="Hauser L."/>
            <person name="Kyrpides N."/>
            <person name="Lykidis A."/>
            <person name="Parales R."/>
            <person name="Richardson P."/>
        </authorList>
    </citation>
    <scope>NUCLEOTIDE SEQUENCE [LARGE SCALE GENOMIC DNA]</scope>
    <source>
        <strain>ATCC 700007 / DSM 6899 / JCM 31910 / BCRC 17059 / LMG 24140 / F1</strain>
    </source>
</reference>